<keyword id="KW-0963">Cytoplasm</keyword>
<keyword id="KW-0620">Polyamine biosynthesis</keyword>
<keyword id="KW-1185">Reference proteome</keyword>
<keyword id="KW-0745">Spermidine biosynthesis</keyword>
<keyword id="KW-0808">Transferase</keyword>
<name>SPEE_ALKMQ</name>
<organism>
    <name type="scientific">Alkaliphilus metalliredigens (strain QYMF)</name>
    <dbReference type="NCBI Taxonomy" id="293826"/>
    <lineage>
        <taxon>Bacteria</taxon>
        <taxon>Bacillati</taxon>
        <taxon>Bacillota</taxon>
        <taxon>Clostridia</taxon>
        <taxon>Peptostreptococcales</taxon>
        <taxon>Natronincolaceae</taxon>
        <taxon>Alkaliphilus</taxon>
    </lineage>
</organism>
<proteinExistence type="inferred from homology"/>
<feature type="chain" id="PRO_1000058548" description="Polyamine aminopropyltransferase">
    <location>
        <begin position="1"/>
        <end position="284"/>
    </location>
</feature>
<feature type="domain" description="PABS" evidence="1">
    <location>
        <begin position="2"/>
        <end position="237"/>
    </location>
</feature>
<feature type="active site" description="Proton acceptor" evidence="1">
    <location>
        <position position="155"/>
    </location>
</feature>
<feature type="binding site" evidence="1">
    <location>
        <position position="31"/>
    </location>
    <ligand>
        <name>S-methyl-5'-thioadenosine</name>
        <dbReference type="ChEBI" id="CHEBI:17509"/>
    </ligand>
</feature>
<feature type="binding site" evidence="1">
    <location>
        <position position="62"/>
    </location>
    <ligand>
        <name>spermidine</name>
        <dbReference type="ChEBI" id="CHEBI:57834"/>
    </ligand>
</feature>
<feature type="binding site" evidence="1">
    <location>
        <position position="86"/>
    </location>
    <ligand>
        <name>spermidine</name>
        <dbReference type="ChEBI" id="CHEBI:57834"/>
    </ligand>
</feature>
<feature type="binding site" evidence="1">
    <location>
        <position position="106"/>
    </location>
    <ligand>
        <name>S-methyl-5'-thioadenosine</name>
        <dbReference type="ChEBI" id="CHEBI:17509"/>
    </ligand>
</feature>
<feature type="binding site" evidence="1">
    <location>
        <begin position="137"/>
        <end position="138"/>
    </location>
    <ligand>
        <name>S-methyl-5'-thioadenosine</name>
        <dbReference type="ChEBI" id="CHEBI:17509"/>
    </ligand>
</feature>
<feature type="binding site" evidence="1">
    <location>
        <begin position="155"/>
        <end position="158"/>
    </location>
    <ligand>
        <name>spermidine</name>
        <dbReference type="ChEBI" id="CHEBI:57834"/>
    </ligand>
</feature>
<feature type="binding site" evidence="1">
    <location>
        <position position="162"/>
    </location>
    <ligand>
        <name>S-methyl-5'-thioadenosine</name>
        <dbReference type="ChEBI" id="CHEBI:17509"/>
    </ligand>
</feature>
<gene>
    <name evidence="1" type="primary">speE</name>
    <name type="ordered locus">Amet_2649</name>
</gene>
<evidence type="ECO:0000255" key="1">
    <source>
        <dbReference type="HAMAP-Rule" id="MF_00198"/>
    </source>
</evidence>
<sequence>MELWYTEEQTQHVRLSFKVKEHLFSEQSEFQKVDVLDTYEFGKLMTLDGLVMVTEKDEFIYHDMIVHVPMAVNPNIKNVLIIGGGDGGTARELMRYQSIKHVDMVEIDKMVCDVARDYFPTISSELENPRVSLYYEDGVAFIKDKENKYDLIIIDSTDPVGPGEGLFSQEFYTNCFKALTEQGILVNQNESPVYEQFAREAIRANSKLKKIFPIVEVYQAQIPTYPSGYWLFGFASKSLHPVKDLKSSVWNQLNLNTKYYNTQLHVGAFALPSYVKEQIENGNV</sequence>
<reference key="1">
    <citation type="journal article" date="2016" name="Genome Announc.">
        <title>Complete genome sequence of Alkaliphilus metalliredigens strain QYMF, an alkaliphilic and metal-reducing bacterium isolated from borax-contaminated leachate ponds.</title>
        <authorList>
            <person name="Hwang C."/>
            <person name="Copeland A."/>
            <person name="Lucas S."/>
            <person name="Lapidus A."/>
            <person name="Barry K."/>
            <person name="Detter J.C."/>
            <person name="Glavina Del Rio T."/>
            <person name="Hammon N."/>
            <person name="Israni S."/>
            <person name="Dalin E."/>
            <person name="Tice H."/>
            <person name="Pitluck S."/>
            <person name="Chertkov O."/>
            <person name="Brettin T."/>
            <person name="Bruce D."/>
            <person name="Han C."/>
            <person name="Schmutz J."/>
            <person name="Larimer F."/>
            <person name="Land M.L."/>
            <person name="Hauser L."/>
            <person name="Kyrpides N."/>
            <person name="Mikhailova N."/>
            <person name="Ye Q."/>
            <person name="Zhou J."/>
            <person name="Richardson P."/>
            <person name="Fields M.W."/>
        </authorList>
    </citation>
    <scope>NUCLEOTIDE SEQUENCE [LARGE SCALE GENOMIC DNA]</scope>
    <source>
        <strain>QYMF</strain>
    </source>
</reference>
<dbReference type="EC" id="2.5.1.16" evidence="1"/>
<dbReference type="EMBL" id="CP000724">
    <property type="protein sequence ID" value="ABR48801.1"/>
    <property type="molecule type" value="Genomic_DNA"/>
</dbReference>
<dbReference type="RefSeq" id="WP_012063775.1">
    <property type="nucleotide sequence ID" value="NC_009633.1"/>
</dbReference>
<dbReference type="SMR" id="A6TRI3"/>
<dbReference type="STRING" id="293826.Amet_2649"/>
<dbReference type="KEGG" id="amt:Amet_2649"/>
<dbReference type="eggNOG" id="COG0421">
    <property type="taxonomic scope" value="Bacteria"/>
</dbReference>
<dbReference type="HOGENOM" id="CLU_048199_1_0_9"/>
<dbReference type="OrthoDB" id="9793120at2"/>
<dbReference type="UniPathway" id="UPA00248">
    <property type="reaction ID" value="UER00314"/>
</dbReference>
<dbReference type="Proteomes" id="UP000001572">
    <property type="component" value="Chromosome"/>
</dbReference>
<dbReference type="GO" id="GO:0005829">
    <property type="term" value="C:cytosol"/>
    <property type="evidence" value="ECO:0007669"/>
    <property type="project" value="TreeGrafter"/>
</dbReference>
<dbReference type="GO" id="GO:0004766">
    <property type="term" value="F:spermidine synthase activity"/>
    <property type="evidence" value="ECO:0007669"/>
    <property type="project" value="UniProtKB-UniRule"/>
</dbReference>
<dbReference type="GO" id="GO:0008295">
    <property type="term" value="P:spermidine biosynthetic process"/>
    <property type="evidence" value="ECO:0007669"/>
    <property type="project" value="UniProtKB-UniRule"/>
</dbReference>
<dbReference type="CDD" id="cd02440">
    <property type="entry name" value="AdoMet_MTases"/>
    <property type="match status" value="1"/>
</dbReference>
<dbReference type="Gene3D" id="2.30.140.10">
    <property type="entry name" value="Spermidine synthase, tetramerisation domain"/>
    <property type="match status" value="1"/>
</dbReference>
<dbReference type="Gene3D" id="3.40.50.150">
    <property type="entry name" value="Vaccinia Virus protein VP39"/>
    <property type="match status" value="1"/>
</dbReference>
<dbReference type="HAMAP" id="MF_00198">
    <property type="entry name" value="Spermidine_synth"/>
    <property type="match status" value="1"/>
</dbReference>
<dbReference type="InterPro" id="IPR030374">
    <property type="entry name" value="PABS"/>
</dbReference>
<dbReference type="InterPro" id="IPR030373">
    <property type="entry name" value="PABS_CS"/>
</dbReference>
<dbReference type="InterPro" id="IPR029063">
    <property type="entry name" value="SAM-dependent_MTases_sf"/>
</dbReference>
<dbReference type="InterPro" id="IPR001045">
    <property type="entry name" value="Spermi_synthase"/>
</dbReference>
<dbReference type="InterPro" id="IPR035246">
    <property type="entry name" value="Spermidine_synt_N"/>
</dbReference>
<dbReference type="InterPro" id="IPR037163">
    <property type="entry name" value="Spermidine_synt_N_sf"/>
</dbReference>
<dbReference type="NCBIfam" id="NF037959">
    <property type="entry name" value="MFS_SpdSyn"/>
    <property type="match status" value="1"/>
</dbReference>
<dbReference type="NCBIfam" id="NF002010">
    <property type="entry name" value="PRK00811.1"/>
    <property type="match status" value="1"/>
</dbReference>
<dbReference type="NCBIfam" id="TIGR00417">
    <property type="entry name" value="speE"/>
    <property type="match status" value="1"/>
</dbReference>
<dbReference type="PANTHER" id="PTHR11558:SF11">
    <property type="entry name" value="SPERMIDINE SYNTHASE"/>
    <property type="match status" value="1"/>
</dbReference>
<dbReference type="PANTHER" id="PTHR11558">
    <property type="entry name" value="SPERMIDINE/SPERMINE SYNTHASE"/>
    <property type="match status" value="1"/>
</dbReference>
<dbReference type="Pfam" id="PF17284">
    <property type="entry name" value="Spermine_synt_N"/>
    <property type="match status" value="1"/>
</dbReference>
<dbReference type="Pfam" id="PF01564">
    <property type="entry name" value="Spermine_synth"/>
    <property type="match status" value="1"/>
</dbReference>
<dbReference type="SUPFAM" id="SSF53335">
    <property type="entry name" value="S-adenosyl-L-methionine-dependent methyltransferases"/>
    <property type="match status" value="1"/>
</dbReference>
<dbReference type="PROSITE" id="PS01330">
    <property type="entry name" value="PABS_1"/>
    <property type="match status" value="1"/>
</dbReference>
<dbReference type="PROSITE" id="PS51006">
    <property type="entry name" value="PABS_2"/>
    <property type="match status" value="1"/>
</dbReference>
<comment type="function">
    <text evidence="1">Catalyzes the irreversible transfer of a propylamine group from the amino donor S-adenosylmethioninamine (decarboxy-AdoMet) to putrescine (1,4-diaminobutane) to yield spermidine.</text>
</comment>
<comment type="catalytic activity">
    <reaction evidence="1">
        <text>S-adenosyl 3-(methylsulfanyl)propylamine + putrescine = S-methyl-5'-thioadenosine + spermidine + H(+)</text>
        <dbReference type="Rhea" id="RHEA:12721"/>
        <dbReference type="ChEBI" id="CHEBI:15378"/>
        <dbReference type="ChEBI" id="CHEBI:17509"/>
        <dbReference type="ChEBI" id="CHEBI:57443"/>
        <dbReference type="ChEBI" id="CHEBI:57834"/>
        <dbReference type="ChEBI" id="CHEBI:326268"/>
        <dbReference type="EC" id="2.5.1.16"/>
    </reaction>
</comment>
<comment type="pathway">
    <text evidence="1">Amine and polyamine biosynthesis; spermidine biosynthesis; spermidine from putrescine: step 1/1.</text>
</comment>
<comment type="subunit">
    <text evidence="1">Homodimer or homotetramer.</text>
</comment>
<comment type="subcellular location">
    <subcellularLocation>
        <location evidence="1">Cytoplasm</location>
    </subcellularLocation>
</comment>
<comment type="similarity">
    <text evidence="1">Belongs to the spermidine/spermine synthase family.</text>
</comment>
<protein>
    <recommendedName>
        <fullName evidence="1">Polyamine aminopropyltransferase</fullName>
    </recommendedName>
    <alternativeName>
        <fullName evidence="1">Putrescine aminopropyltransferase</fullName>
        <shortName evidence="1">PAPT</shortName>
    </alternativeName>
    <alternativeName>
        <fullName evidence="1">Spermidine synthase</fullName>
        <shortName evidence="1">SPDS</shortName>
        <shortName evidence="1">SPDSY</shortName>
        <ecNumber evidence="1">2.5.1.16</ecNumber>
    </alternativeName>
</protein>
<accession>A6TRI3</accession>